<accession>Q8FFX9</accession>
<feature type="chain" id="PRO_0000194010" description="Nickel/cobalt efflux system RcnA">
    <location>
        <begin position="1"/>
        <end position="274"/>
    </location>
</feature>
<feature type="topological domain" description="Periplasmic" evidence="2">
    <location>
        <begin position="1"/>
        <end position="12"/>
    </location>
</feature>
<feature type="transmembrane region" description="Helical" evidence="2">
    <location>
        <begin position="13"/>
        <end position="33"/>
    </location>
</feature>
<feature type="topological domain" description="Cytoplasmic" evidence="2">
    <location>
        <begin position="34"/>
        <end position="56"/>
    </location>
</feature>
<feature type="transmembrane region" description="Helical" evidence="2">
    <location>
        <begin position="57"/>
        <end position="77"/>
    </location>
</feature>
<feature type="topological domain" description="Periplasmic" evidence="2">
    <location>
        <begin position="78"/>
        <end position="86"/>
    </location>
</feature>
<feature type="transmembrane region" description="Helical" evidence="2">
    <location>
        <begin position="87"/>
        <end position="107"/>
    </location>
</feature>
<feature type="topological domain" description="Cytoplasmic" evidence="2">
    <location>
        <begin position="108"/>
        <end position="175"/>
    </location>
</feature>
<feature type="transmembrane region" description="Helical" evidence="2">
    <location>
        <begin position="176"/>
        <end position="196"/>
    </location>
</feature>
<feature type="topological domain" description="Periplasmic" evidence="2">
    <location>
        <begin position="197"/>
        <end position="209"/>
    </location>
</feature>
<feature type="transmembrane region" description="Helical" evidence="2">
    <location>
        <begin position="210"/>
        <end position="230"/>
    </location>
</feature>
<feature type="topological domain" description="Cytoplasmic" evidence="2">
    <location>
        <begin position="231"/>
        <end position="251"/>
    </location>
</feature>
<feature type="transmembrane region" description="Helical" evidence="2">
    <location>
        <begin position="252"/>
        <end position="272"/>
    </location>
</feature>
<feature type="topological domain" description="Periplasmic" evidence="2">
    <location>
        <begin position="273"/>
        <end position="274"/>
    </location>
</feature>
<feature type="region of interest" description="Disordered" evidence="3">
    <location>
        <begin position="127"/>
        <end position="153"/>
    </location>
</feature>
<feature type="compositionally biased region" description="Basic and acidic residues" evidence="3">
    <location>
        <begin position="127"/>
        <end position="137"/>
    </location>
</feature>
<protein>
    <recommendedName>
        <fullName>Nickel/cobalt efflux system RcnA</fullName>
    </recommendedName>
</protein>
<dbReference type="EMBL" id="AE014075">
    <property type="protein sequence ID" value="AAN81089.1"/>
    <property type="molecule type" value="Genomic_DNA"/>
</dbReference>
<dbReference type="RefSeq" id="WP_000134614.1">
    <property type="nucleotide sequence ID" value="NZ_CP051263.1"/>
</dbReference>
<dbReference type="STRING" id="199310.c2633"/>
<dbReference type="KEGG" id="ecc:c2633"/>
<dbReference type="eggNOG" id="COG2215">
    <property type="taxonomic scope" value="Bacteria"/>
</dbReference>
<dbReference type="HOGENOM" id="CLU_058605_2_0_6"/>
<dbReference type="BioCyc" id="ECOL199310:C2633-MONOMER"/>
<dbReference type="Proteomes" id="UP000001410">
    <property type="component" value="Chromosome"/>
</dbReference>
<dbReference type="GO" id="GO:0005886">
    <property type="term" value="C:plasma membrane"/>
    <property type="evidence" value="ECO:0007669"/>
    <property type="project" value="UniProtKB-SubCell"/>
</dbReference>
<dbReference type="GO" id="GO:0046583">
    <property type="term" value="F:monoatomic cation efflux transmembrane transporter activity"/>
    <property type="evidence" value="ECO:0007669"/>
    <property type="project" value="TreeGrafter"/>
</dbReference>
<dbReference type="GO" id="GO:0015099">
    <property type="term" value="F:nickel cation transmembrane transporter activity"/>
    <property type="evidence" value="ECO:0007669"/>
    <property type="project" value="InterPro"/>
</dbReference>
<dbReference type="GO" id="GO:0006824">
    <property type="term" value="P:cobalt ion transport"/>
    <property type="evidence" value="ECO:0007669"/>
    <property type="project" value="UniProtKB-KW"/>
</dbReference>
<dbReference type="GO" id="GO:0032025">
    <property type="term" value="P:response to cobalt ion"/>
    <property type="evidence" value="ECO:0007669"/>
    <property type="project" value="TreeGrafter"/>
</dbReference>
<dbReference type="GO" id="GO:0010045">
    <property type="term" value="P:response to nickel cation"/>
    <property type="evidence" value="ECO:0007669"/>
    <property type="project" value="TreeGrafter"/>
</dbReference>
<dbReference type="InterPro" id="IPR011541">
    <property type="entry name" value="Ni/Co_transpt_high_affinity"/>
</dbReference>
<dbReference type="InterPro" id="IPR051224">
    <property type="entry name" value="NiCoT_RcnA"/>
</dbReference>
<dbReference type="NCBIfam" id="NF007454">
    <property type="entry name" value="PRK10019.1"/>
    <property type="match status" value="1"/>
</dbReference>
<dbReference type="PANTHER" id="PTHR40659">
    <property type="entry name" value="NICKEL/COBALT EFFLUX SYSTEM RCNA"/>
    <property type="match status" value="1"/>
</dbReference>
<dbReference type="PANTHER" id="PTHR40659:SF1">
    <property type="entry name" value="NICKEL_COBALT EFFLUX SYSTEM RCNA"/>
    <property type="match status" value="1"/>
</dbReference>
<dbReference type="Pfam" id="PF03824">
    <property type="entry name" value="NicO"/>
    <property type="match status" value="1"/>
</dbReference>
<reference key="1">
    <citation type="journal article" date="2002" name="Proc. Natl. Acad. Sci. U.S.A.">
        <title>Extensive mosaic structure revealed by the complete genome sequence of uropathogenic Escherichia coli.</title>
        <authorList>
            <person name="Welch R.A."/>
            <person name="Burland V."/>
            <person name="Plunkett G. III"/>
            <person name="Redford P."/>
            <person name="Roesch P."/>
            <person name="Rasko D."/>
            <person name="Buckles E.L."/>
            <person name="Liou S.-R."/>
            <person name="Boutin A."/>
            <person name="Hackett J."/>
            <person name="Stroud D."/>
            <person name="Mayhew G.F."/>
            <person name="Rose D.J."/>
            <person name="Zhou S."/>
            <person name="Schwartz D.C."/>
            <person name="Perna N.T."/>
            <person name="Mobley H.L.T."/>
            <person name="Donnenberg M.S."/>
            <person name="Blattner F.R."/>
        </authorList>
    </citation>
    <scope>NUCLEOTIDE SEQUENCE [LARGE SCALE GENOMIC DNA]</scope>
    <source>
        <strain>CFT073 / ATCC 700928 / UPEC</strain>
    </source>
</reference>
<evidence type="ECO:0000250" key="1"/>
<evidence type="ECO:0000255" key="2"/>
<evidence type="ECO:0000256" key="3">
    <source>
        <dbReference type="SAM" id="MobiDB-lite"/>
    </source>
</evidence>
<evidence type="ECO:0000305" key="4"/>
<gene>
    <name type="primary">rcnA</name>
    <name type="ordered locus">c2633</name>
</gene>
<comment type="function">
    <text evidence="1">Efflux system for nickel and cobalt.</text>
</comment>
<comment type="subcellular location">
    <subcellularLocation>
        <location evidence="1">Cell inner membrane</location>
        <topology evidence="1">Multi-pass membrane protein</topology>
    </subcellularLocation>
</comment>
<comment type="induction">
    <text evidence="1">By nickel and cobalt. Transcriptionally repressed by RcnR (By similarity).</text>
</comment>
<comment type="similarity">
    <text evidence="4">Belongs to the NiCoT transporter (TC 2.A.52) family. RcnA subfamily.</text>
</comment>
<proteinExistence type="inferred from homology"/>
<organism>
    <name type="scientific">Escherichia coli O6:H1 (strain CFT073 / ATCC 700928 / UPEC)</name>
    <dbReference type="NCBI Taxonomy" id="199310"/>
    <lineage>
        <taxon>Bacteria</taxon>
        <taxon>Pseudomonadati</taxon>
        <taxon>Pseudomonadota</taxon>
        <taxon>Gammaproteobacteria</taxon>
        <taxon>Enterobacterales</taxon>
        <taxon>Enterobacteriaceae</taxon>
        <taxon>Escherichia</taxon>
    </lineage>
</organism>
<sequence>MTEFTTLLQQGNAWFFIPSAILLGALHGLEPGHSKTMMAAFIIAIKGTIKQAVMLGLAATISHTAVVWLIAFGGMVISKRFTAQSAEPWLQLISAVIIISTAFWMFWRTWRGERNWLENMHEHDHEHHHHDHEDHHDHGHHHHHEHGEYQDAHARAHANDIKRRFDGREVTNWQILLFGLTGGLIPCPAAITVLLICIQLKALTLGATLVVSFSLGLALTLVTVGVGAAISVQQVAKRWSGFNTLAKRAPYFSSLLIGLVGVYMGVHGFMGIMR</sequence>
<name>RCNA_ECOL6</name>
<keyword id="KW-0997">Cell inner membrane</keyword>
<keyword id="KW-1003">Cell membrane</keyword>
<keyword id="KW-0170">Cobalt</keyword>
<keyword id="KW-0171">Cobalt transport</keyword>
<keyword id="KW-0406">Ion transport</keyword>
<keyword id="KW-0472">Membrane</keyword>
<keyword id="KW-0533">Nickel</keyword>
<keyword id="KW-0921">Nickel transport</keyword>
<keyword id="KW-1185">Reference proteome</keyword>
<keyword id="KW-0812">Transmembrane</keyword>
<keyword id="KW-1133">Transmembrane helix</keyword>
<keyword id="KW-0813">Transport</keyword>